<dbReference type="EMBL" id="U25275">
    <property type="protein sequence ID" value="AAA80641.1"/>
    <property type="molecule type" value="mRNA"/>
</dbReference>
<dbReference type="SMR" id="P48511"/>
<dbReference type="GO" id="GO:0005634">
    <property type="term" value="C:nucleus"/>
    <property type="evidence" value="ECO:0007669"/>
    <property type="project" value="UniProtKB-SubCell"/>
</dbReference>
<dbReference type="GO" id="GO:0003677">
    <property type="term" value="F:DNA binding"/>
    <property type="evidence" value="ECO:0007669"/>
    <property type="project" value="UniProtKB-KW"/>
</dbReference>
<dbReference type="GO" id="GO:0006352">
    <property type="term" value="P:DNA-templated transcription initiation"/>
    <property type="evidence" value="ECO:0007669"/>
    <property type="project" value="InterPro"/>
</dbReference>
<dbReference type="CDD" id="cd04516">
    <property type="entry name" value="TBP_eukaryotes"/>
    <property type="match status" value="1"/>
</dbReference>
<dbReference type="FunFam" id="3.30.310.10:FF:000001">
    <property type="entry name" value="TATA-box-binding protein 2"/>
    <property type="match status" value="1"/>
</dbReference>
<dbReference type="FunFam" id="3.30.310.10:FF:000002">
    <property type="entry name" value="TATA-box-binding protein 2"/>
    <property type="match status" value="1"/>
</dbReference>
<dbReference type="Gene3D" id="3.30.310.10">
    <property type="entry name" value="TATA-Binding Protein"/>
    <property type="match status" value="2"/>
</dbReference>
<dbReference type="HAMAP" id="MF_00408">
    <property type="entry name" value="TATA_bind_prot_arch"/>
    <property type="match status" value="1"/>
</dbReference>
<dbReference type="InterPro" id="IPR000814">
    <property type="entry name" value="TBP"/>
</dbReference>
<dbReference type="InterPro" id="IPR030491">
    <property type="entry name" value="TBP_CS"/>
</dbReference>
<dbReference type="InterPro" id="IPR012295">
    <property type="entry name" value="TBP_dom_sf"/>
</dbReference>
<dbReference type="InterPro" id="IPR033710">
    <property type="entry name" value="TBP_eukaryotic"/>
</dbReference>
<dbReference type="PANTHER" id="PTHR10126">
    <property type="entry name" value="TATA-BOX BINDING PROTEIN"/>
    <property type="match status" value="1"/>
</dbReference>
<dbReference type="Pfam" id="PF00352">
    <property type="entry name" value="TBP"/>
    <property type="match status" value="2"/>
</dbReference>
<dbReference type="PRINTS" id="PR00686">
    <property type="entry name" value="TIFACTORIID"/>
</dbReference>
<dbReference type="SUPFAM" id="SSF55945">
    <property type="entry name" value="TATA-box binding protein-like"/>
    <property type="match status" value="2"/>
</dbReference>
<dbReference type="PROSITE" id="PS00351">
    <property type="entry name" value="TFIID"/>
    <property type="match status" value="2"/>
</dbReference>
<comment type="function">
    <text>General transcription factor that functions at the core of the DNA-binding multiprotein factor TFIID. Binding of TFIID to the TATA box is the initial transcriptional step of the pre-initiation complex (PIC), playing a role in the activation of eukaryotic genes transcribed by RNA polymerase II.</text>
</comment>
<comment type="subunit">
    <text>Belongs to the TFIID complex together with the TBP-associated factors (TAFs). Binds DNA as monomer.</text>
</comment>
<comment type="subcellular location">
    <subcellularLocation>
        <location>Nucleus</location>
    </subcellularLocation>
</comment>
<comment type="similarity">
    <text evidence="1">Belongs to the TBP family.</text>
</comment>
<reference key="1">
    <citation type="online journal article" date="1995" name="Plant Gene Register">
        <title>Isolation and characterization of a cDNA clone encoding a TATA-binding protein from the common ice plant, Mesembryanthemum crystallinum.</title>
        <authorList>
            <person name="Schaeffer H.J."/>
            <person name="Forsthoefel N.R."/>
            <person name="Cushman J.C."/>
        </authorList>
        <locator>PGR95-039</locator>
    </citation>
    <scope>NUCLEOTIDE SEQUENCE [MRNA]</scope>
    <source>
        <tissue>Leaf</tissue>
    </source>
</reference>
<accession>P48511</accession>
<protein>
    <recommendedName>
        <fullName>TATA-box-binding protein</fullName>
    </recommendedName>
    <alternativeName>
        <fullName>TATA sequence-binding protein</fullName>
        <shortName>TBP</shortName>
    </alternativeName>
    <alternativeName>
        <fullName>TATA-binding factor</fullName>
    </alternativeName>
    <alternativeName>
        <fullName>TATA-box factor</fullName>
    </alternativeName>
    <alternativeName>
        <fullName>Transcription initiation factor TFIID TBP subunit</fullName>
    </alternativeName>
</protein>
<proteinExistence type="evidence at transcript level"/>
<evidence type="ECO:0000305" key="1"/>
<keyword id="KW-0238">DNA-binding</keyword>
<keyword id="KW-0539">Nucleus</keyword>
<keyword id="KW-0677">Repeat</keyword>
<keyword id="KW-0804">Transcription</keyword>
<sequence>MAEQGLEGSQPVDPIKHPSGIVPTLQNIVSTVNLDCKLDLKAIALQARNAEYNPKRFAAVIMRIREPKTTALIFASGKMVCTGAKSEQQSKLAARKYARIIQKLGFPAKFKDFKIQNIVGSCDVKFPIRLEGLAYSHGAFSSYEPELFPGLIYRMKQPKIVLLIFVSGKIVLTGAKVREETYTAFENIYPVLTEFRKNQQ</sequence>
<feature type="chain" id="PRO_0000153980" description="TATA-box-binding protein">
    <location>
        <begin position="1"/>
        <end position="200"/>
    </location>
</feature>
<feature type="repeat" description="1">
    <location>
        <begin position="25"/>
        <end position="101"/>
    </location>
</feature>
<feature type="repeat" description="2">
    <location>
        <begin position="115"/>
        <end position="192"/>
    </location>
</feature>
<organism>
    <name type="scientific">Mesembryanthemum crystallinum</name>
    <name type="common">Common ice plant</name>
    <name type="synonym">Cryophytum crystallinum</name>
    <dbReference type="NCBI Taxonomy" id="3544"/>
    <lineage>
        <taxon>Eukaryota</taxon>
        <taxon>Viridiplantae</taxon>
        <taxon>Streptophyta</taxon>
        <taxon>Embryophyta</taxon>
        <taxon>Tracheophyta</taxon>
        <taxon>Spermatophyta</taxon>
        <taxon>Magnoliopsida</taxon>
        <taxon>eudicotyledons</taxon>
        <taxon>Gunneridae</taxon>
        <taxon>Pentapetalae</taxon>
        <taxon>Caryophyllales</taxon>
        <taxon>Aizoaceae</taxon>
        <taxon>Mesembryanthemum</taxon>
        <taxon>Mesembryanthemum subgen. Cryophytum</taxon>
    </lineage>
</organism>
<name>TBP_MESCR</name>